<comment type="function">
    <text evidence="1">Catalyzes carboxymethyl transfer from carboxy-S-adenosyl-L-methionine (Cx-SAM) to 5-hydroxyuridine (ho5U) to form 5-carboxymethoxyuridine (cmo5U) at position 34 in tRNAs.</text>
</comment>
<comment type="catalytic activity">
    <reaction evidence="1">
        <text>carboxy-S-adenosyl-L-methionine + 5-hydroxyuridine(34) in tRNA = 5-carboxymethoxyuridine(34) in tRNA + S-adenosyl-L-homocysteine + H(+)</text>
        <dbReference type="Rhea" id="RHEA:52848"/>
        <dbReference type="Rhea" id="RHEA-COMP:13381"/>
        <dbReference type="Rhea" id="RHEA-COMP:13383"/>
        <dbReference type="ChEBI" id="CHEBI:15378"/>
        <dbReference type="ChEBI" id="CHEBI:57856"/>
        <dbReference type="ChEBI" id="CHEBI:134278"/>
        <dbReference type="ChEBI" id="CHEBI:136877"/>
        <dbReference type="ChEBI" id="CHEBI:136879"/>
    </reaction>
</comment>
<comment type="subunit">
    <text evidence="1">Homotetramer.</text>
</comment>
<comment type="similarity">
    <text evidence="1">Belongs to the class I-like SAM-binding methyltransferase superfamily. CmoB family.</text>
</comment>
<keyword id="KW-0808">Transferase</keyword>
<keyword id="KW-0819">tRNA processing</keyword>
<organism>
    <name type="scientific">Escherichia coli O9:H4 (strain HS)</name>
    <dbReference type="NCBI Taxonomy" id="331112"/>
    <lineage>
        <taxon>Bacteria</taxon>
        <taxon>Pseudomonadati</taxon>
        <taxon>Pseudomonadota</taxon>
        <taxon>Gammaproteobacteria</taxon>
        <taxon>Enterobacterales</taxon>
        <taxon>Enterobacteriaceae</taxon>
        <taxon>Escherichia</taxon>
    </lineage>
</organism>
<protein>
    <recommendedName>
        <fullName evidence="1">tRNA U34 carboxymethyltransferase</fullName>
        <ecNumber evidence="1">2.5.1.-</ecNumber>
    </recommendedName>
</protein>
<evidence type="ECO:0000255" key="1">
    <source>
        <dbReference type="HAMAP-Rule" id="MF_01590"/>
    </source>
</evidence>
<name>CMOB_ECOHS</name>
<sequence>MIDFGNFYSLIAKNHLSHWLETLPAQIANWQREQQHGLFKQWSNAVEFLPEIKPYRLDLLHSVTAESEEPLSAGQIKRIETLMRNLMPWRKGPFSLYGVNIDTEWRSDWKWDRVLPHLSDLTGRTILDVGCGSGYHMWRMIGAGAHLAVGIDPTQLFLCQFEAVRKLLGNDQRAHLLPLGIEQLPALKAFDTVFSMGVLYHRRSPLEHLWQLKDQLVNEGELVLETLVIDGDENTVLVPGDRYAQMRNVYFIPSALALKNWLKKCGFVDIRIADVSVTTTEEQRRTEWMVTESLADFLDPHDPSKTVEGYPAPKRAVLIARKP</sequence>
<proteinExistence type="inferred from homology"/>
<accession>A8A172</accession>
<feature type="chain" id="PRO_1000069328" description="tRNA U34 carboxymethyltransferase">
    <location>
        <begin position="1"/>
        <end position="323"/>
    </location>
</feature>
<feature type="binding site" evidence="1">
    <location>
        <position position="91"/>
    </location>
    <ligand>
        <name>carboxy-S-adenosyl-L-methionine</name>
        <dbReference type="ChEBI" id="CHEBI:134278"/>
    </ligand>
</feature>
<feature type="binding site" evidence="1">
    <location>
        <position position="105"/>
    </location>
    <ligand>
        <name>carboxy-S-adenosyl-L-methionine</name>
        <dbReference type="ChEBI" id="CHEBI:134278"/>
    </ligand>
</feature>
<feature type="binding site" evidence="1">
    <location>
        <position position="110"/>
    </location>
    <ligand>
        <name>carboxy-S-adenosyl-L-methionine</name>
        <dbReference type="ChEBI" id="CHEBI:134278"/>
    </ligand>
</feature>
<feature type="binding site" evidence="1">
    <location>
        <position position="130"/>
    </location>
    <ligand>
        <name>carboxy-S-adenosyl-L-methionine</name>
        <dbReference type="ChEBI" id="CHEBI:134278"/>
    </ligand>
</feature>
<feature type="binding site" evidence="1">
    <location>
        <begin position="152"/>
        <end position="154"/>
    </location>
    <ligand>
        <name>carboxy-S-adenosyl-L-methionine</name>
        <dbReference type="ChEBI" id="CHEBI:134278"/>
    </ligand>
</feature>
<feature type="binding site" evidence="1">
    <location>
        <begin position="181"/>
        <end position="182"/>
    </location>
    <ligand>
        <name>carboxy-S-adenosyl-L-methionine</name>
        <dbReference type="ChEBI" id="CHEBI:134278"/>
    </ligand>
</feature>
<feature type="binding site" evidence="1">
    <location>
        <position position="196"/>
    </location>
    <ligand>
        <name>carboxy-S-adenosyl-L-methionine</name>
        <dbReference type="ChEBI" id="CHEBI:134278"/>
    </ligand>
</feature>
<feature type="binding site" evidence="1">
    <location>
        <position position="200"/>
    </location>
    <ligand>
        <name>carboxy-S-adenosyl-L-methionine</name>
        <dbReference type="ChEBI" id="CHEBI:134278"/>
    </ligand>
</feature>
<feature type="binding site" evidence="1">
    <location>
        <position position="315"/>
    </location>
    <ligand>
        <name>carboxy-S-adenosyl-L-methionine</name>
        <dbReference type="ChEBI" id="CHEBI:134278"/>
    </ligand>
</feature>
<reference key="1">
    <citation type="journal article" date="2008" name="J. Bacteriol.">
        <title>The pangenome structure of Escherichia coli: comparative genomic analysis of E. coli commensal and pathogenic isolates.</title>
        <authorList>
            <person name="Rasko D.A."/>
            <person name="Rosovitz M.J."/>
            <person name="Myers G.S.A."/>
            <person name="Mongodin E.F."/>
            <person name="Fricke W.F."/>
            <person name="Gajer P."/>
            <person name="Crabtree J."/>
            <person name="Sebaihia M."/>
            <person name="Thomson N.R."/>
            <person name="Chaudhuri R."/>
            <person name="Henderson I.R."/>
            <person name="Sperandio V."/>
            <person name="Ravel J."/>
        </authorList>
    </citation>
    <scope>NUCLEOTIDE SEQUENCE [LARGE SCALE GENOMIC DNA]</scope>
    <source>
        <strain>HS</strain>
    </source>
</reference>
<gene>
    <name evidence="1" type="primary">cmoB</name>
    <name type="ordered locus">EcHS_A1965</name>
</gene>
<dbReference type="EC" id="2.5.1.-" evidence="1"/>
<dbReference type="EMBL" id="CP000802">
    <property type="protein sequence ID" value="ABV06276.1"/>
    <property type="molecule type" value="Genomic_DNA"/>
</dbReference>
<dbReference type="RefSeq" id="WP_000564726.1">
    <property type="nucleotide sequence ID" value="NC_009800.1"/>
</dbReference>
<dbReference type="SMR" id="A8A172"/>
<dbReference type="KEGG" id="ecx:EcHS_A1965"/>
<dbReference type="HOGENOM" id="CLU_052665_0_0_6"/>
<dbReference type="GO" id="GO:0008168">
    <property type="term" value="F:methyltransferase activity"/>
    <property type="evidence" value="ECO:0007669"/>
    <property type="project" value="TreeGrafter"/>
</dbReference>
<dbReference type="GO" id="GO:0016765">
    <property type="term" value="F:transferase activity, transferring alkyl or aryl (other than methyl) groups"/>
    <property type="evidence" value="ECO:0007669"/>
    <property type="project" value="UniProtKB-UniRule"/>
</dbReference>
<dbReference type="GO" id="GO:0002098">
    <property type="term" value="P:tRNA wobble uridine modification"/>
    <property type="evidence" value="ECO:0007669"/>
    <property type="project" value="InterPro"/>
</dbReference>
<dbReference type="CDD" id="cd02440">
    <property type="entry name" value="AdoMet_MTases"/>
    <property type="match status" value="1"/>
</dbReference>
<dbReference type="FunFam" id="3.40.50.150:FF:000080">
    <property type="entry name" value="tRNA U34 carboxymethyltransferase"/>
    <property type="match status" value="1"/>
</dbReference>
<dbReference type="Gene3D" id="3.40.50.150">
    <property type="entry name" value="Vaccinia Virus protein VP39"/>
    <property type="match status" value="1"/>
</dbReference>
<dbReference type="HAMAP" id="MF_01590">
    <property type="entry name" value="tRNA_carboxymethyltr_CmoB"/>
    <property type="match status" value="1"/>
</dbReference>
<dbReference type="InterPro" id="IPR010017">
    <property type="entry name" value="CmoB"/>
</dbReference>
<dbReference type="InterPro" id="IPR027555">
    <property type="entry name" value="Mo5U34_MeTrfas-like"/>
</dbReference>
<dbReference type="InterPro" id="IPR029063">
    <property type="entry name" value="SAM-dependent_MTases_sf"/>
</dbReference>
<dbReference type="NCBIfam" id="NF011650">
    <property type="entry name" value="PRK15068.1"/>
    <property type="match status" value="1"/>
</dbReference>
<dbReference type="NCBIfam" id="TIGR00452">
    <property type="entry name" value="tRNA 5-methoxyuridine(34)/uridine 5-oxyacetic acid(34) synthase CmoB"/>
    <property type="match status" value="1"/>
</dbReference>
<dbReference type="PANTHER" id="PTHR43464">
    <property type="entry name" value="METHYLTRANSFERASE"/>
    <property type="match status" value="1"/>
</dbReference>
<dbReference type="PANTHER" id="PTHR43464:SF95">
    <property type="entry name" value="TRNA U34 CARBOXYMETHYLTRANSFERASE"/>
    <property type="match status" value="1"/>
</dbReference>
<dbReference type="Pfam" id="PF08003">
    <property type="entry name" value="Methyltransf_9"/>
    <property type="match status" value="1"/>
</dbReference>
<dbReference type="SUPFAM" id="SSF53335">
    <property type="entry name" value="S-adenosyl-L-methionine-dependent methyltransferases"/>
    <property type="match status" value="1"/>
</dbReference>